<reference key="1">
    <citation type="journal article" date="2005" name="Arch. Microbiol.">
        <title>bac genes for recombinant bacilysin and anticapsin production in Bacillus host strains.</title>
        <authorList>
            <person name="Steinborn G."/>
            <person name="Hajirezaei M.-R."/>
            <person name="Hofemeister J."/>
        </authorList>
    </citation>
    <scope>NUCLEOTIDE SEQUENCE [GENOMIC DNA]</scope>
    <scope>FUNCTION IN BACILYSIN PRODUCTION</scope>
    <scope>GENE NAME</scope>
    <source>
        <strain>A1/3</strain>
    </source>
</reference>
<dbReference type="EC" id="1.1.1.385" evidence="2"/>
<dbReference type="EMBL" id="AF396778">
    <property type="protein sequence ID" value="AAM90570.1"/>
    <property type="molecule type" value="Genomic_DNA"/>
</dbReference>
<dbReference type="SMR" id="Q8KWT4"/>
<dbReference type="STRING" id="483913.AN935_19105"/>
<dbReference type="UniPathway" id="UPA00100"/>
<dbReference type="GO" id="GO:0016491">
    <property type="term" value="F:oxidoreductase activity"/>
    <property type="evidence" value="ECO:0007669"/>
    <property type="project" value="UniProtKB-KW"/>
</dbReference>
<dbReference type="GO" id="GO:0017000">
    <property type="term" value="P:antibiotic biosynthetic process"/>
    <property type="evidence" value="ECO:0007669"/>
    <property type="project" value="UniProtKB-KW"/>
</dbReference>
<dbReference type="CDD" id="cd05233">
    <property type="entry name" value="SDR_c"/>
    <property type="match status" value="1"/>
</dbReference>
<dbReference type="FunFam" id="3.40.50.720:FF:000084">
    <property type="entry name" value="Short-chain dehydrogenase reductase"/>
    <property type="match status" value="1"/>
</dbReference>
<dbReference type="Gene3D" id="3.40.50.720">
    <property type="entry name" value="NAD(P)-binding Rossmann-like Domain"/>
    <property type="match status" value="1"/>
</dbReference>
<dbReference type="InterPro" id="IPR036291">
    <property type="entry name" value="NAD(P)-bd_dom_sf"/>
</dbReference>
<dbReference type="InterPro" id="IPR020904">
    <property type="entry name" value="Sc_DH/Rdtase_CS"/>
</dbReference>
<dbReference type="InterPro" id="IPR002347">
    <property type="entry name" value="SDR_fam"/>
</dbReference>
<dbReference type="NCBIfam" id="NF033173">
    <property type="entry name" value="anticapsin_BacC"/>
    <property type="match status" value="1"/>
</dbReference>
<dbReference type="NCBIfam" id="NF005559">
    <property type="entry name" value="PRK07231.1"/>
    <property type="match status" value="1"/>
</dbReference>
<dbReference type="PANTHER" id="PTHR24321">
    <property type="entry name" value="DEHYDROGENASES, SHORT CHAIN"/>
    <property type="match status" value="1"/>
</dbReference>
<dbReference type="PANTHER" id="PTHR24321:SF8">
    <property type="entry name" value="ESTRADIOL 17-BETA-DEHYDROGENASE 8-RELATED"/>
    <property type="match status" value="1"/>
</dbReference>
<dbReference type="Pfam" id="PF13561">
    <property type="entry name" value="adh_short_C2"/>
    <property type="match status" value="1"/>
</dbReference>
<dbReference type="PRINTS" id="PR00081">
    <property type="entry name" value="GDHRDH"/>
</dbReference>
<dbReference type="PRINTS" id="PR00080">
    <property type="entry name" value="SDRFAMILY"/>
</dbReference>
<dbReference type="SUPFAM" id="SSF51735">
    <property type="entry name" value="NAD(P)-binding Rossmann-fold domains"/>
    <property type="match status" value="1"/>
</dbReference>
<dbReference type="PROSITE" id="PS00061">
    <property type="entry name" value="ADH_SHORT"/>
    <property type="match status" value="1"/>
</dbReference>
<evidence type="ECO:0000250" key="1">
    <source>
        <dbReference type="UniProtKB" id="P16544"/>
    </source>
</evidence>
<evidence type="ECO:0000250" key="2">
    <source>
        <dbReference type="UniProtKB" id="P39640"/>
    </source>
</evidence>
<evidence type="ECO:0000255" key="3">
    <source>
        <dbReference type="PROSITE-ProRule" id="PRU10001"/>
    </source>
</evidence>
<evidence type="ECO:0000303" key="4">
    <source>
    </source>
</evidence>
<evidence type="ECO:0000305" key="5"/>
<evidence type="ECO:0000305" key="6">
    <source>
    </source>
</evidence>
<comment type="function">
    <text evidence="2">Part of the bacABCDEFG operon responsible for the biosynthesis of bacilysin, an irreversible inactivator of the glutaminase domain of glucosamine synthetase. Catalyzes the dehydrogenation of the C7-hydroxyl group in the 4S-tetrahydrotyrosine (4S-H4Tyr) to yield anticapsin (epoxycyclohexanonyl-Ala).</text>
</comment>
<comment type="catalytic activity">
    <reaction evidence="2">
        <text>L-dihydroanticapsin + NAD(+) = L-anticapsin + NADH + H(+)</text>
        <dbReference type="Rhea" id="RHEA:44628"/>
        <dbReference type="ChEBI" id="CHEBI:15378"/>
        <dbReference type="ChEBI" id="CHEBI:57540"/>
        <dbReference type="ChEBI" id="CHEBI:57945"/>
        <dbReference type="ChEBI" id="CHEBI:84310"/>
        <dbReference type="ChEBI" id="CHEBI:84358"/>
        <dbReference type="EC" id="1.1.1.385"/>
    </reaction>
</comment>
<comment type="pathway">
    <text evidence="6">Antibiotic biosynthesis; bacilysin biosynthesis.</text>
</comment>
<comment type="similarity">
    <text evidence="5">Belongs to the short-chain dehydrogenases/reductases (SDR) family.</text>
</comment>
<feature type="chain" id="PRO_0000054523" description="Dihydroanticapsin 7-dehydrogenase">
    <location>
        <begin position="1"/>
        <end position="253"/>
    </location>
</feature>
<feature type="active site" description="Proton acceptor" evidence="3">
    <location>
        <position position="152"/>
    </location>
</feature>
<feature type="binding site" evidence="1">
    <location>
        <begin position="9"/>
        <end position="31"/>
    </location>
    <ligand>
        <name>NAD(+)</name>
        <dbReference type="ChEBI" id="CHEBI:57540"/>
    </ligand>
</feature>
<feature type="binding site" evidence="1">
    <location>
        <position position="139"/>
    </location>
    <ligand>
        <name>substrate</name>
    </ligand>
</feature>
<proteinExistence type="evidence at protein level"/>
<organism>
    <name type="scientific">Bacillus subtilis</name>
    <dbReference type="NCBI Taxonomy" id="1423"/>
    <lineage>
        <taxon>Bacteria</taxon>
        <taxon>Bacillati</taxon>
        <taxon>Bacillota</taxon>
        <taxon>Bacilli</taxon>
        <taxon>Bacillales</taxon>
        <taxon>Bacillaceae</taxon>
        <taxon>Bacillus</taxon>
    </lineage>
</organism>
<gene>
    <name evidence="4" type="primary">bacC</name>
</gene>
<protein>
    <recommendedName>
        <fullName evidence="2">Dihydroanticapsin 7-dehydrogenase</fullName>
        <ecNumber evidence="2">1.1.1.385</ecNumber>
    </recommendedName>
    <alternativeName>
        <fullName evidence="4">Bacilysin biosynthesis oxidoreductase BacC</fullName>
    </alternativeName>
</protein>
<keyword id="KW-0045">Antibiotic biosynthesis</keyword>
<keyword id="KW-0520">NAD</keyword>
<keyword id="KW-0560">Oxidoreductase</keyword>
<accession>Q8KWT4</accession>
<sequence length="253" mass="27293">MNLTDKTVLITGGASGIGYAAVQAFLNQQANVVVADIDEAQGEAMIRKENNDRLHFVHTDITDEPACQNAIRSAVDKFGGLDVLINNAGIEIVAPIHEMELSNWNKVLNVNLTGMFLMSKHALKYMLKSGKGNIINTCSVGGVVAWPDIPAYNASKGGVLQLTRSMAVDYAKHNIRVNCVCPGIIDTPLNEKSFLENNEGTLEEIKKEKAKVNPLLRLGKPEEIANVMLFLASDLSSYMTGSAITADGGYTAQ</sequence>
<name>BACC_BACIU</name>